<evidence type="ECO:0000250" key="1"/>
<evidence type="ECO:0000305" key="2"/>
<keyword id="KW-0067">ATP-binding</keyword>
<keyword id="KW-0436">Ligase</keyword>
<keyword id="KW-0547">Nucleotide-binding</keyword>
<keyword id="KW-0648">Protein biosynthesis</keyword>
<keyword id="KW-1185">Reference proteome</keyword>
<gene>
    <name type="primary">gatC</name>
    <name type="ordered locus">MT3092</name>
</gene>
<proteinExistence type="inferred from homology"/>
<comment type="function">
    <text evidence="1">Allows the formation of correctly charged Asn-tRNA(Asn) or Gln-tRNA(Gln) through the transamidation of misacylated Asp-tRNA(Asn) or Glu-tRNA(Gln) in organisms which lack either or both of asparaginyl-tRNA or glutaminyl-tRNA synthetases. The reaction takes place in the presence of glutamine and ATP through an activated phospho-Asp-tRNA(Asn) or phospho-Glu-tRNA(Gln) (By similarity).</text>
</comment>
<comment type="catalytic activity">
    <reaction>
        <text>L-glutamyl-tRNA(Gln) + L-glutamine + ATP + H2O = L-glutaminyl-tRNA(Gln) + L-glutamate + ADP + phosphate + H(+)</text>
        <dbReference type="Rhea" id="RHEA:17521"/>
        <dbReference type="Rhea" id="RHEA-COMP:9681"/>
        <dbReference type="Rhea" id="RHEA-COMP:9684"/>
        <dbReference type="ChEBI" id="CHEBI:15377"/>
        <dbReference type="ChEBI" id="CHEBI:15378"/>
        <dbReference type="ChEBI" id="CHEBI:29985"/>
        <dbReference type="ChEBI" id="CHEBI:30616"/>
        <dbReference type="ChEBI" id="CHEBI:43474"/>
        <dbReference type="ChEBI" id="CHEBI:58359"/>
        <dbReference type="ChEBI" id="CHEBI:78520"/>
        <dbReference type="ChEBI" id="CHEBI:78521"/>
        <dbReference type="ChEBI" id="CHEBI:456216"/>
    </reaction>
</comment>
<comment type="catalytic activity">
    <reaction>
        <text>L-aspartyl-tRNA(Asn) + L-glutamine + ATP + H2O = L-asparaginyl-tRNA(Asn) + L-glutamate + ADP + phosphate + 2 H(+)</text>
        <dbReference type="Rhea" id="RHEA:14513"/>
        <dbReference type="Rhea" id="RHEA-COMP:9674"/>
        <dbReference type="Rhea" id="RHEA-COMP:9677"/>
        <dbReference type="ChEBI" id="CHEBI:15377"/>
        <dbReference type="ChEBI" id="CHEBI:15378"/>
        <dbReference type="ChEBI" id="CHEBI:29985"/>
        <dbReference type="ChEBI" id="CHEBI:30616"/>
        <dbReference type="ChEBI" id="CHEBI:43474"/>
        <dbReference type="ChEBI" id="CHEBI:58359"/>
        <dbReference type="ChEBI" id="CHEBI:78515"/>
        <dbReference type="ChEBI" id="CHEBI:78516"/>
        <dbReference type="ChEBI" id="CHEBI:456216"/>
    </reaction>
</comment>
<comment type="subunit">
    <text evidence="1">Heterotrimer of A, B and C subunits.</text>
</comment>
<comment type="similarity">
    <text evidence="2">Belongs to the GatC family.</text>
</comment>
<name>GATC_MYCTO</name>
<organism>
    <name type="scientific">Mycobacterium tuberculosis (strain CDC 1551 / Oshkosh)</name>
    <dbReference type="NCBI Taxonomy" id="83331"/>
    <lineage>
        <taxon>Bacteria</taxon>
        <taxon>Bacillati</taxon>
        <taxon>Actinomycetota</taxon>
        <taxon>Actinomycetes</taxon>
        <taxon>Mycobacteriales</taxon>
        <taxon>Mycobacteriaceae</taxon>
        <taxon>Mycobacterium</taxon>
        <taxon>Mycobacterium tuberculosis complex</taxon>
    </lineage>
</organism>
<protein>
    <recommendedName>
        <fullName>Glutamyl-tRNA(Gln) amidotransferase subunit C</fullName>
        <shortName>Glu-ADT subunit C</shortName>
        <ecNumber>6.3.5.-</ecNumber>
    </recommendedName>
</protein>
<reference key="1">
    <citation type="journal article" date="2002" name="J. Bacteriol.">
        <title>Whole-genome comparison of Mycobacterium tuberculosis clinical and laboratory strains.</title>
        <authorList>
            <person name="Fleischmann R.D."/>
            <person name="Alland D."/>
            <person name="Eisen J.A."/>
            <person name="Carpenter L."/>
            <person name="White O."/>
            <person name="Peterson J.D."/>
            <person name="DeBoy R.T."/>
            <person name="Dodson R.J."/>
            <person name="Gwinn M.L."/>
            <person name="Haft D.H."/>
            <person name="Hickey E.K."/>
            <person name="Kolonay J.F."/>
            <person name="Nelson W.C."/>
            <person name="Umayam L.A."/>
            <person name="Ermolaeva M.D."/>
            <person name="Salzberg S.L."/>
            <person name="Delcher A."/>
            <person name="Utterback T.R."/>
            <person name="Weidman J.F."/>
            <person name="Khouri H.M."/>
            <person name="Gill J."/>
            <person name="Mikula A."/>
            <person name="Bishai W."/>
            <person name="Jacobs W.R. Jr."/>
            <person name="Venter J.C."/>
            <person name="Fraser C.M."/>
        </authorList>
    </citation>
    <scope>NUCLEOTIDE SEQUENCE [LARGE SCALE GENOMIC DNA]</scope>
    <source>
        <strain>CDC 1551 / Oshkosh</strain>
    </source>
</reference>
<feature type="chain" id="PRO_0000427184" description="Glutamyl-tRNA(Gln) amidotransferase subunit C">
    <location>
        <begin position="1"/>
        <end position="99"/>
    </location>
</feature>
<sequence length="99" mass="10748">MSQISRDEVAHLARLARLALTETELDSFAGQLDAILTHVSQIQAVDVTGVQATDNPLKDVNVTRPDETVPCLTQRQVLDQAPDAVDGRFAVPQILGDEQ</sequence>
<accession>P9WN58</accession>
<accession>L0TE24</accession>
<accession>O53259</accession>
<accession>P64205</accession>
<dbReference type="EC" id="6.3.5.-"/>
<dbReference type="EMBL" id="AE000516">
    <property type="protein sequence ID" value="AAK47421.1"/>
    <property type="molecule type" value="Genomic_DNA"/>
</dbReference>
<dbReference type="PIR" id="G70856">
    <property type="entry name" value="G70856"/>
</dbReference>
<dbReference type="RefSeq" id="WP_003415256.1">
    <property type="nucleotide sequence ID" value="NZ_KK341227.1"/>
</dbReference>
<dbReference type="SMR" id="P9WN58"/>
<dbReference type="GeneID" id="45427002"/>
<dbReference type="KEGG" id="mtc:MT3092"/>
<dbReference type="PATRIC" id="fig|83331.31.peg.3333"/>
<dbReference type="HOGENOM" id="CLU_105899_1_0_11"/>
<dbReference type="Proteomes" id="UP000001020">
    <property type="component" value="Chromosome"/>
</dbReference>
<dbReference type="GO" id="GO:0050566">
    <property type="term" value="F:asparaginyl-tRNA synthase (glutamine-hydrolyzing) activity"/>
    <property type="evidence" value="ECO:0007669"/>
    <property type="project" value="RHEA"/>
</dbReference>
<dbReference type="GO" id="GO:0005524">
    <property type="term" value="F:ATP binding"/>
    <property type="evidence" value="ECO:0007669"/>
    <property type="project" value="UniProtKB-KW"/>
</dbReference>
<dbReference type="GO" id="GO:0050567">
    <property type="term" value="F:glutaminyl-tRNA synthase (glutamine-hydrolyzing) activity"/>
    <property type="evidence" value="ECO:0007669"/>
    <property type="project" value="UniProtKB-UniRule"/>
</dbReference>
<dbReference type="GO" id="GO:0070681">
    <property type="term" value="P:glutaminyl-tRNAGln biosynthesis via transamidation"/>
    <property type="evidence" value="ECO:0007669"/>
    <property type="project" value="TreeGrafter"/>
</dbReference>
<dbReference type="GO" id="GO:0006450">
    <property type="term" value="P:regulation of translational fidelity"/>
    <property type="evidence" value="ECO:0007669"/>
    <property type="project" value="InterPro"/>
</dbReference>
<dbReference type="GO" id="GO:0006412">
    <property type="term" value="P:translation"/>
    <property type="evidence" value="ECO:0007669"/>
    <property type="project" value="UniProtKB-UniRule"/>
</dbReference>
<dbReference type="FunFam" id="1.10.20.60:FF:000001">
    <property type="entry name" value="Aspartyl/glutamyl-tRNA(Asn/Gln) amidotransferase subunit C"/>
    <property type="match status" value="1"/>
</dbReference>
<dbReference type="Gene3D" id="1.10.20.60">
    <property type="entry name" value="Glu-tRNAGln amidotransferase C subunit, N-terminal domain"/>
    <property type="match status" value="1"/>
</dbReference>
<dbReference type="HAMAP" id="MF_00122">
    <property type="entry name" value="GatC"/>
    <property type="match status" value="1"/>
</dbReference>
<dbReference type="InterPro" id="IPR036113">
    <property type="entry name" value="Asp/Glu-ADT_sf_sub_c"/>
</dbReference>
<dbReference type="InterPro" id="IPR003837">
    <property type="entry name" value="GatC"/>
</dbReference>
<dbReference type="NCBIfam" id="TIGR00135">
    <property type="entry name" value="gatC"/>
    <property type="match status" value="1"/>
</dbReference>
<dbReference type="PANTHER" id="PTHR15004">
    <property type="entry name" value="GLUTAMYL-TRNA(GLN) AMIDOTRANSFERASE SUBUNIT C, MITOCHONDRIAL"/>
    <property type="match status" value="1"/>
</dbReference>
<dbReference type="PANTHER" id="PTHR15004:SF0">
    <property type="entry name" value="GLUTAMYL-TRNA(GLN) AMIDOTRANSFERASE SUBUNIT C, MITOCHONDRIAL"/>
    <property type="match status" value="1"/>
</dbReference>
<dbReference type="Pfam" id="PF02686">
    <property type="entry name" value="GatC"/>
    <property type="match status" value="1"/>
</dbReference>
<dbReference type="SUPFAM" id="SSF141000">
    <property type="entry name" value="Glu-tRNAGln amidotransferase C subunit"/>
    <property type="match status" value="1"/>
</dbReference>